<feature type="chain" id="PRO_0000417902" description="L-carnitine dehydrogenase">
    <location>
        <begin position="1"/>
        <end position="321"/>
    </location>
</feature>
<feature type="binding site" evidence="1">
    <location>
        <begin position="14"/>
        <end position="19"/>
    </location>
    <ligand>
        <name>NAD(+)</name>
        <dbReference type="ChEBI" id="CHEBI:57540"/>
    </ligand>
</feature>
<organism>
    <name type="scientific">Pseudomonas putida (strain ATCC 47054 / DSM 6125 / CFBP 8728 / NCIMB 11950 / KT2440)</name>
    <dbReference type="NCBI Taxonomy" id="160488"/>
    <lineage>
        <taxon>Bacteria</taxon>
        <taxon>Pseudomonadati</taxon>
        <taxon>Pseudomonadota</taxon>
        <taxon>Gammaproteobacteria</taxon>
        <taxon>Pseudomonadales</taxon>
        <taxon>Pseudomonadaceae</taxon>
        <taxon>Pseudomonas</taxon>
    </lineage>
</organism>
<name>LCDH_PSEPK</name>
<protein>
    <recommendedName>
        <fullName evidence="1">L-carnitine dehydrogenase</fullName>
        <shortName evidence="1">CDH</shortName>
        <shortName evidence="1">L-CDH</shortName>
        <ecNumber evidence="1">1.1.1.108</ecNumber>
    </recommendedName>
</protein>
<gene>
    <name evidence="2" type="primary">lcdH</name>
    <name evidence="2" type="ordered locus">PP_0302</name>
</gene>
<accession>Q88R32</accession>
<dbReference type="EC" id="1.1.1.108" evidence="1"/>
<dbReference type="EMBL" id="AE015451">
    <property type="protein sequence ID" value="AAN65933.1"/>
    <property type="molecule type" value="Genomic_DNA"/>
</dbReference>
<dbReference type="RefSeq" id="NP_742469.1">
    <property type="nucleotide sequence ID" value="NC_002947.4"/>
</dbReference>
<dbReference type="RefSeq" id="WP_010951667.1">
    <property type="nucleotide sequence ID" value="NZ_CP169744.1"/>
</dbReference>
<dbReference type="SMR" id="Q88R32"/>
<dbReference type="STRING" id="160488.PP_0302"/>
<dbReference type="PaxDb" id="160488-PP_0302"/>
<dbReference type="KEGG" id="ppu:PP_0302"/>
<dbReference type="PATRIC" id="fig|160488.4.peg.327"/>
<dbReference type="eggNOG" id="COG1250">
    <property type="taxonomic scope" value="Bacteria"/>
</dbReference>
<dbReference type="HOGENOM" id="CLU_009834_0_1_6"/>
<dbReference type="OrthoDB" id="9803287at2"/>
<dbReference type="PhylomeDB" id="Q88R32"/>
<dbReference type="BioCyc" id="PPUT160488:G1G01-334-MONOMER"/>
<dbReference type="UniPathway" id="UPA00117"/>
<dbReference type="Proteomes" id="UP000000556">
    <property type="component" value="Chromosome"/>
</dbReference>
<dbReference type="GO" id="GO:0005737">
    <property type="term" value="C:cytoplasm"/>
    <property type="evidence" value="ECO:0007669"/>
    <property type="project" value="UniProtKB-SubCell"/>
</dbReference>
<dbReference type="GO" id="GO:0047728">
    <property type="term" value="F:carnitine 3-dehydrogenase activity"/>
    <property type="evidence" value="ECO:0007669"/>
    <property type="project" value="UniProtKB-UniRule"/>
</dbReference>
<dbReference type="GO" id="GO:0070403">
    <property type="term" value="F:NAD+ binding"/>
    <property type="evidence" value="ECO:0007669"/>
    <property type="project" value="InterPro"/>
</dbReference>
<dbReference type="GO" id="GO:0009437">
    <property type="term" value="P:carnitine metabolic process"/>
    <property type="evidence" value="ECO:0007669"/>
    <property type="project" value="UniProtKB-UniRule"/>
</dbReference>
<dbReference type="GO" id="GO:0009056">
    <property type="term" value="P:catabolic process"/>
    <property type="evidence" value="ECO:0007669"/>
    <property type="project" value="UniProtKB-ARBA"/>
</dbReference>
<dbReference type="GO" id="GO:0006631">
    <property type="term" value="P:fatty acid metabolic process"/>
    <property type="evidence" value="ECO:0007669"/>
    <property type="project" value="InterPro"/>
</dbReference>
<dbReference type="FunFam" id="1.10.1040.10:FF:000027">
    <property type="entry name" value="L-carnitine dehydrogenase"/>
    <property type="match status" value="1"/>
</dbReference>
<dbReference type="FunFam" id="3.40.50.720:FF:000522">
    <property type="entry name" value="L-carnitine dehydrogenase"/>
    <property type="match status" value="1"/>
</dbReference>
<dbReference type="Gene3D" id="1.10.1040.10">
    <property type="entry name" value="N-(1-d-carboxylethyl)-l-norvaline Dehydrogenase, domain 2"/>
    <property type="match status" value="1"/>
</dbReference>
<dbReference type="Gene3D" id="3.40.50.720">
    <property type="entry name" value="NAD(P)-binding Rossmann-like Domain"/>
    <property type="match status" value="1"/>
</dbReference>
<dbReference type="HAMAP" id="MF_02129">
    <property type="entry name" value="L_carnitine_dehydrog"/>
    <property type="match status" value="1"/>
</dbReference>
<dbReference type="InterPro" id="IPR006176">
    <property type="entry name" value="3-OHacyl-CoA_DH_NAD-bd"/>
</dbReference>
<dbReference type="InterPro" id="IPR006108">
    <property type="entry name" value="3HC_DH_C"/>
</dbReference>
<dbReference type="InterPro" id="IPR008927">
    <property type="entry name" value="6-PGluconate_DH-like_C_sf"/>
</dbReference>
<dbReference type="InterPro" id="IPR013328">
    <property type="entry name" value="6PGD_dom2"/>
</dbReference>
<dbReference type="InterPro" id="IPR026578">
    <property type="entry name" value="L-carnitine_dehydrogenase"/>
</dbReference>
<dbReference type="InterPro" id="IPR036291">
    <property type="entry name" value="NAD(P)-bd_dom_sf"/>
</dbReference>
<dbReference type="NCBIfam" id="NF005471">
    <property type="entry name" value="PRK07066.1"/>
    <property type="match status" value="1"/>
</dbReference>
<dbReference type="PANTHER" id="PTHR48075">
    <property type="entry name" value="3-HYDROXYACYL-COA DEHYDROGENASE FAMILY PROTEIN"/>
    <property type="match status" value="1"/>
</dbReference>
<dbReference type="PANTHER" id="PTHR48075:SF5">
    <property type="entry name" value="3-HYDROXYBUTYRYL-COA DEHYDROGENASE"/>
    <property type="match status" value="1"/>
</dbReference>
<dbReference type="Pfam" id="PF00725">
    <property type="entry name" value="3HCDH"/>
    <property type="match status" value="1"/>
</dbReference>
<dbReference type="Pfam" id="PF02737">
    <property type="entry name" value="3HCDH_N"/>
    <property type="match status" value="1"/>
</dbReference>
<dbReference type="SUPFAM" id="SSF48179">
    <property type="entry name" value="6-phosphogluconate dehydrogenase C-terminal domain-like"/>
    <property type="match status" value="1"/>
</dbReference>
<dbReference type="SUPFAM" id="SSF51735">
    <property type="entry name" value="NAD(P)-binding Rossmann-fold domains"/>
    <property type="match status" value="1"/>
</dbReference>
<sequence length="321" mass="34618">MPFITEIKTFAALGSGVIGSGWVARALAHGLDVVAWDPAPGAEQALRKRVANAWPALEKQGLAPGASQDRLKFVATIEECVRNADFIQESAPERLDLKLDLHAKISAAAKPDAIIGSSTSGLLPSEFYESSTHPERCVVGHPFNPVYLLPLVEIVGGSRTSPEAIEAAKTIYTALGMRPLHVRKEVPGFIADRLLEALWREALHLVNDGVATTGEIDDAIRFGAGLRWSFMGTFLTYTLAGGDAGMRHFMSQFGPALKLPWTYLPAPELTDKLIDDVVSGTSEQQGERSIAALERYRDDTLLAVLEAVKSSKASHGLSFSD</sequence>
<evidence type="ECO:0000255" key="1">
    <source>
        <dbReference type="HAMAP-Rule" id="MF_02129"/>
    </source>
</evidence>
<evidence type="ECO:0000312" key="2">
    <source>
        <dbReference type="EMBL" id="AAN65933.1"/>
    </source>
</evidence>
<keyword id="KW-0963">Cytoplasm</keyword>
<keyword id="KW-0520">NAD</keyword>
<keyword id="KW-0560">Oxidoreductase</keyword>
<keyword id="KW-1185">Reference proteome</keyword>
<reference key="1">
    <citation type="journal article" date="2002" name="Environ. Microbiol.">
        <title>Complete genome sequence and comparative analysis of the metabolically versatile Pseudomonas putida KT2440.</title>
        <authorList>
            <person name="Nelson K.E."/>
            <person name="Weinel C."/>
            <person name="Paulsen I.T."/>
            <person name="Dodson R.J."/>
            <person name="Hilbert H."/>
            <person name="Martins dos Santos V.A.P."/>
            <person name="Fouts D.E."/>
            <person name="Gill S.R."/>
            <person name="Pop M."/>
            <person name="Holmes M."/>
            <person name="Brinkac L.M."/>
            <person name="Beanan M.J."/>
            <person name="DeBoy R.T."/>
            <person name="Daugherty S.C."/>
            <person name="Kolonay J.F."/>
            <person name="Madupu R."/>
            <person name="Nelson W.C."/>
            <person name="White O."/>
            <person name="Peterson J.D."/>
            <person name="Khouri H.M."/>
            <person name="Hance I."/>
            <person name="Chris Lee P."/>
            <person name="Holtzapple E.K."/>
            <person name="Scanlan D."/>
            <person name="Tran K."/>
            <person name="Moazzez A."/>
            <person name="Utterback T.R."/>
            <person name="Rizzo M."/>
            <person name="Lee K."/>
            <person name="Kosack D."/>
            <person name="Moestl D."/>
            <person name="Wedler H."/>
            <person name="Lauber J."/>
            <person name="Stjepandic D."/>
            <person name="Hoheisel J."/>
            <person name="Straetz M."/>
            <person name="Heim S."/>
            <person name="Kiewitz C."/>
            <person name="Eisen J.A."/>
            <person name="Timmis K.N."/>
            <person name="Duesterhoeft A."/>
            <person name="Tuemmler B."/>
            <person name="Fraser C.M."/>
        </authorList>
    </citation>
    <scope>NUCLEOTIDE SEQUENCE [LARGE SCALE GENOMIC DNA]</scope>
    <source>
        <strain>ATCC 47054 / DSM 6125 / CFBP 8728 / NCIMB 11950 / KT2440</strain>
    </source>
</reference>
<proteinExistence type="inferred from homology"/>
<comment type="function">
    <text evidence="1">Catalyzes the NAD(+)-dependent oxidation of L-carnitine to 3-dehydrocarnitine.</text>
</comment>
<comment type="catalytic activity">
    <reaction evidence="1">
        <text>carnitine + NAD(+) = 3-dehydrocarnitine + NADH + H(+)</text>
        <dbReference type="Rhea" id="RHEA:19265"/>
        <dbReference type="ChEBI" id="CHEBI:15378"/>
        <dbReference type="ChEBI" id="CHEBI:17126"/>
        <dbReference type="ChEBI" id="CHEBI:57540"/>
        <dbReference type="ChEBI" id="CHEBI:57885"/>
        <dbReference type="ChEBI" id="CHEBI:57945"/>
        <dbReference type="EC" id="1.1.1.108"/>
    </reaction>
</comment>
<comment type="pathway">
    <text evidence="1">Amine and polyamine metabolism; carnitine metabolism.</text>
</comment>
<comment type="subunit">
    <text evidence="1">Homodimer.</text>
</comment>
<comment type="subcellular location">
    <subcellularLocation>
        <location evidence="1">Cytoplasm</location>
    </subcellularLocation>
</comment>
<comment type="similarity">
    <text evidence="1">Belongs to the 3-hydroxyacyl-CoA dehydrogenase family. L-carnitine dehydrogenase subfamily.</text>
</comment>